<sequence length="300" mass="34195">MKQYLITGGTGMVGSQLVNEIKKSDSHITILTRHDQISNDKKISYVNWAKSGWEHKVPQNIDVVINLAGATLNKRWTPEYKQTLMLSRIQSTQALYELFKSRNKAPKVLFNASATGYYPPDLFMSYTEVYKTLPFDFLSDIVYQWERFAQQFEQLGTRVVIGRFGIILSNEGGALQTMKLPYEYYIGGKLGSGQQWYSWIHINDLIQAILFLINNESASGPFNLTAPIPERQNLFGYTLARAMHKPHETWAPSLAMRLILGQMSTVVLDTQKVLPNKIQALGFQFKYSNLKIALEDLISK</sequence>
<protein>
    <recommendedName>
        <fullName>Epimerase family protein SAB0724c</fullName>
    </recommendedName>
</protein>
<dbReference type="EMBL" id="AJ938182">
    <property type="protein sequence ID" value="CAI80412.1"/>
    <property type="molecule type" value="Genomic_DNA"/>
</dbReference>
<dbReference type="RefSeq" id="WP_000816299.1">
    <property type="nucleotide sequence ID" value="NC_007622.1"/>
</dbReference>
<dbReference type="SMR" id="Q2YSF6"/>
<dbReference type="KEGG" id="sab:SAB0724c"/>
<dbReference type="HOGENOM" id="CLU_047373_0_3_9"/>
<dbReference type="Gene3D" id="3.40.50.720">
    <property type="entry name" value="NAD(P)-binding Rossmann-like Domain"/>
    <property type="match status" value="1"/>
</dbReference>
<dbReference type="InterPro" id="IPR013549">
    <property type="entry name" value="DUF1731"/>
</dbReference>
<dbReference type="InterPro" id="IPR001509">
    <property type="entry name" value="Epimerase_deHydtase"/>
</dbReference>
<dbReference type="InterPro" id="IPR036291">
    <property type="entry name" value="NAD(P)-bd_dom_sf"/>
</dbReference>
<dbReference type="InterPro" id="IPR010099">
    <property type="entry name" value="SDR39U1"/>
</dbReference>
<dbReference type="NCBIfam" id="TIGR01777">
    <property type="entry name" value="yfcH"/>
    <property type="match status" value="1"/>
</dbReference>
<dbReference type="PANTHER" id="PTHR11092:SF0">
    <property type="entry name" value="EPIMERASE FAMILY PROTEIN SDR39U1"/>
    <property type="match status" value="1"/>
</dbReference>
<dbReference type="PANTHER" id="PTHR11092">
    <property type="entry name" value="SUGAR NUCLEOTIDE EPIMERASE RELATED"/>
    <property type="match status" value="1"/>
</dbReference>
<dbReference type="Pfam" id="PF08338">
    <property type="entry name" value="DUF1731"/>
    <property type="match status" value="1"/>
</dbReference>
<dbReference type="Pfam" id="PF01370">
    <property type="entry name" value="Epimerase"/>
    <property type="match status" value="1"/>
</dbReference>
<dbReference type="SUPFAM" id="SSF51735">
    <property type="entry name" value="NAD(P)-binding Rossmann-fold domains"/>
    <property type="match status" value="1"/>
</dbReference>
<accession>Q2YSF6</accession>
<name>Y724_STAAB</name>
<organism>
    <name type="scientific">Staphylococcus aureus (strain bovine RF122 / ET3-1)</name>
    <dbReference type="NCBI Taxonomy" id="273036"/>
    <lineage>
        <taxon>Bacteria</taxon>
        <taxon>Bacillati</taxon>
        <taxon>Bacillota</taxon>
        <taxon>Bacilli</taxon>
        <taxon>Bacillales</taxon>
        <taxon>Staphylococcaceae</taxon>
        <taxon>Staphylococcus</taxon>
    </lineage>
</organism>
<reference key="1">
    <citation type="journal article" date="2007" name="PLoS ONE">
        <title>Molecular correlates of host specialization in Staphylococcus aureus.</title>
        <authorList>
            <person name="Herron-Olson L."/>
            <person name="Fitzgerald J.R."/>
            <person name="Musser J.M."/>
            <person name="Kapur V."/>
        </authorList>
    </citation>
    <scope>NUCLEOTIDE SEQUENCE [LARGE SCALE GENOMIC DNA]</scope>
    <source>
        <strain>bovine RF122 / ET3-1</strain>
    </source>
</reference>
<proteinExistence type="inferred from homology"/>
<evidence type="ECO:0000305" key="1"/>
<gene>
    <name type="ordered locus">SAB0724c</name>
</gene>
<comment type="similarity">
    <text evidence="1">Belongs to the NAD(P)-dependent epimerase/dehydratase family. SDR39U1 subfamily.</text>
</comment>
<feature type="chain" id="PRO_0000274150" description="Epimerase family protein SAB0724c">
    <location>
        <begin position="1"/>
        <end position="300"/>
    </location>
</feature>